<accession>Q31VX9</accession>
<protein>
    <recommendedName>
        <fullName evidence="1">Small ribosomal subunit protein uS11</fullName>
    </recommendedName>
    <alternativeName>
        <fullName evidence="2">30S ribosomal protein S11</fullName>
    </alternativeName>
</protein>
<name>RS11_SHIBS</name>
<evidence type="ECO:0000255" key="1">
    <source>
        <dbReference type="HAMAP-Rule" id="MF_01310"/>
    </source>
</evidence>
<evidence type="ECO:0000305" key="2"/>
<sequence length="129" mass="13845">MAKAPIRARKRVRKQVSDGVAHIHASFNNTIVTITDRQGNALGWATAGGSGFRGSRKSTPFAAQVAAERCADAVKEYGIKNLEVMVKGPGPGRESTIRALNAAGFRITNITDVTPIPHNGCRPPKKRRV</sequence>
<comment type="function">
    <text evidence="1">Located on the platform of the 30S subunit, it bridges several disparate RNA helices of the 16S rRNA. Forms part of the Shine-Dalgarno cleft in the 70S ribosome.</text>
</comment>
<comment type="subunit">
    <text evidence="1">Part of the 30S ribosomal subunit. Interacts with proteins S7 and S18. Binds to IF-3.</text>
</comment>
<comment type="similarity">
    <text evidence="1">Belongs to the universal ribosomal protein uS11 family.</text>
</comment>
<keyword id="KW-0687">Ribonucleoprotein</keyword>
<keyword id="KW-0689">Ribosomal protein</keyword>
<keyword id="KW-0694">RNA-binding</keyword>
<keyword id="KW-0699">rRNA-binding</keyword>
<proteinExistence type="inferred from homology"/>
<reference key="1">
    <citation type="journal article" date="2005" name="Nucleic Acids Res.">
        <title>Genome dynamics and diversity of Shigella species, the etiologic agents of bacillary dysentery.</title>
        <authorList>
            <person name="Yang F."/>
            <person name="Yang J."/>
            <person name="Zhang X."/>
            <person name="Chen L."/>
            <person name="Jiang Y."/>
            <person name="Yan Y."/>
            <person name="Tang X."/>
            <person name="Wang J."/>
            <person name="Xiong Z."/>
            <person name="Dong J."/>
            <person name="Xue Y."/>
            <person name="Zhu Y."/>
            <person name="Xu X."/>
            <person name="Sun L."/>
            <person name="Chen S."/>
            <person name="Nie H."/>
            <person name="Peng J."/>
            <person name="Xu J."/>
            <person name="Wang Y."/>
            <person name="Yuan Z."/>
            <person name="Wen Y."/>
            <person name="Yao Z."/>
            <person name="Shen Y."/>
            <person name="Qiang B."/>
            <person name="Hou Y."/>
            <person name="Yu J."/>
            <person name="Jin Q."/>
        </authorList>
    </citation>
    <scope>NUCLEOTIDE SEQUENCE [LARGE SCALE GENOMIC DNA]</scope>
    <source>
        <strain>Sb227</strain>
    </source>
</reference>
<dbReference type="EMBL" id="CP000036">
    <property type="protein sequence ID" value="ABB67779.1"/>
    <property type="molecule type" value="Genomic_DNA"/>
</dbReference>
<dbReference type="RefSeq" id="WP_001029684.1">
    <property type="nucleotide sequence ID" value="NC_007613.1"/>
</dbReference>
<dbReference type="SMR" id="Q31VX9"/>
<dbReference type="GeneID" id="93778690"/>
<dbReference type="KEGG" id="sbo:SBO_3291"/>
<dbReference type="HOGENOM" id="CLU_072439_5_0_6"/>
<dbReference type="Proteomes" id="UP000007067">
    <property type="component" value="Chromosome"/>
</dbReference>
<dbReference type="GO" id="GO:1990904">
    <property type="term" value="C:ribonucleoprotein complex"/>
    <property type="evidence" value="ECO:0007669"/>
    <property type="project" value="UniProtKB-KW"/>
</dbReference>
<dbReference type="GO" id="GO:0005840">
    <property type="term" value="C:ribosome"/>
    <property type="evidence" value="ECO:0007669"/>
    <property type="project" value="UniProtKB-KW"/>
</dbReference>
<dbReference type="GO" id="GO:0019843">
    <property type="term" value="F:rRNA binding"/>
    <property type="evidence" value="ECO:0007669"/>
    <property type="project" value="UniProtKB-UniRule"/>
</dbReference>
<dbReference type="GO" id="GO:0003735">
    <property type="term" value="F:structural constituent of ribosome"/>
    <property type="evidence" value="ECO:0007669"/>
    <property type="project" value="InterPro"/>
</dbReference>
<dbReference type="GO" id="GO:0006412">
    <property type="term" value="P:translation"/>
    <property type="evidence" value="ECO:0007669"/>
    <property type="project" value="UniProtKB-UniRule"/>
</dbReference>
<dbReference type="FunFam" id="3.30.420.80:FF:000001">
    <property type="entry name" value="30S ribosomal protein S11"/>
    <property type="match status" value="1"/>
</dbReference>
<dbReference type="Gene3D" id="3.30.420.80">
    <property type="entry name" value="Ribosomal protein S11"/>
    <property type="match status" value="1"/>
</dbReference>
<dbReference type="HAMAP" id="MF_01310">
    <property type="entry name" value="Ribosomal_uS11"/>
    <property type="match status" value="1"/>
</dbReference>
<dbReference type="InterPro" id="IPR001971">
    <property type="entry name" value="Ribosomal_uS11"/>
</dbReference>
<dbReference type="InterPro" id="IPR019981">
    <property type="entry name" value="Ribosomal_uS11_bac-type"/>
</dbReference>
<dbReference type="InterPro" id="IPR018102">
    <property type="entry name" value="Ribosomal_uS11_CS"/>
</dbReference>
<dbReference type="InterPro" id="IPR036967">
    <property type="entry name" value="Ribosomal_uS11_sf"/>
</dbReference>
<dbReference type="NCBIfam" id="NF003698">
    <property type="entry name" value="PRK05309.1"/>
    <property type="match status" value="1"/>
</dbReference>
<dbReference type="NCBIfam" id="TIGR03632">
    <property type="entry name" value="uS11_bact"/>
    <property type="match status" value="1"/>
</dbReference>
<dbReference type="PANTHER" id="PTHR11759">
    <property type="entry name" value="40S RIBOSOMAL PROTEIN S14/30S RIBOSOMAL PROTEIN S11"/>
    <property type="match status" value="1"/>
</dbReference>
<dbReference type="Pfam" id="PF00411">
    <property type="entry name" value="Ribosomal_S11"/>
    <property type="match status" value="1"/>
</dbReference>
<dbReference type="PIRSF" id="PIRSF002131">
    <property type="entry name" value="Ribosomal_S11"/>
    <property type="match status" value="1"/>
</dbReference>
<dbReference type="SUPFAM" id="SSF53137">
    <property type="entry name" value="Translational machinery components"/>
    <property type="match status" value="1"/>
</dbReference>
<dbReference type="PROSITE" id="PS00054">
    <property type="entry name" value="RIBOSOMAL_S11"/>
    <property type="match status" value="1"/>
</dbReference>
<feature type="chain" id="PRO_0000230429" description="Small ribosomal subunit protein uS11">
    <location>
        <begin position="1"/>
        <end position="129"/>
    </location>
</feature>
<gene>
    <name evidence="1" type="primary">rpsK</name>
    <name type="ordered locus">SBO_3291</name>
</gene>
<organism>
    <name type="scientific">Shigella boydii serotype 4 (strain Sb227)</name>
    <dbReference type="NCBI Taxonomy" id="300268"/>
    <lineage>
        <taxon>Bacteria</taxon>
        <taxon>Pseudomonadati</taxon>
        <taxon>Pseudomonadota</taxon>
        <taxon>Gammaproteobacteria</taxon>
        <taxon>Enterobacterales</taxon>
        <taxon>Enterobacteriaceae</taxon>
        <taxon>Shigella</taxon>
    </lineage>
</organism>